<reference key="1">
    <citation type="journal article" date="2006" name="Appl. Environ. Microbiol.">
        <title>Genome sequence of the chemolithoautotrophic nitrite-oxidizing bacterium Nitrobacter winogradskyi Nb-255.</title>
        <authorList>
            <person name="Starkenburg S.R."/>
            <person name="Chain P.S.G."/>
            <person name="Sayavedra-Soto L.A."/>
            <person name="Hauser L."/>
            <person name="Land M.L."/>
            <person name="Larimer F.W."/>
            <person name="Malfatti S.A."/>
            <person name="Klotz M.G."/>
            <person name="Bottomley P.J."/>
            <person name="Arp D.J."/>
            <person name="Hickey W.J."/>
        </authorList>
    </citation>
    <scope>NUCLEOTIDE SEQUENCE [LARGE SCALE GENOMIC DNA]</scope>
    <source>
        <strain>ATCC 25391 / DSM 10237 / CIP 104748 / NCIMB 11846 / Nb-255</strain>
    </source>
</reference>
<proteinExistence type="inferred from homology"/>
<organism>
    <name type="scientific">Nitrobacter winogradskyi (strain ATCC 25391 / DSM 10237 / CIP 104748 / NCIMB 11846 / Nb-255)</name>
    <dbReference type="NCBI Taxonomy" id="323098"/>
    <lineage>
        <taxon>Bacteria</taxon>
        <taxon>Pseudomonadati</taxon>
        <taxon>Pseudomonadota</taxon>
        <taxon>Alphaproteobacteria</taxon>
        <taxon>Hyphomicrobiales</taxon>
        <taxon>Nitrobacteraceae</taxon>
        <taxon>Nitrobacter</taxon>
    </lineage>
</organism>
<protein>
    <recommendedName>
        <fullName evidence="1">Cytochrome c-type biogenesis protein CcmE</fullName>
    </recommendedName>
    <alternativeName>
        <fullName evidence="1">Cytochrome c maturation protein E</fullName>
    </alternativeName>
    <alternativeName>
        <fullName evidence="1">Heme chaperone CcmE</fullName>
    </alternativeName>
</protein>
<dbReference type="EMBL" id="CP000115">
    <property type="protein sequence ID" value="ABA04454.1"/>
    <property type="molecule type" value="Genomic_DNA"/>
</dbReference>
<dbReference type="RefSeq" id="WP_011314483.1">
    <property type="nucleotide sequence ID" value="NC_007406.1"/>
</dbReference>
<dbReference type="SMR" id="Q3STD7"/>
<dbReference type="STRING" id="323098.Nwi_1192"/>
<dbReference type="KEGG" id="nwi:Nwi_1192"/>
<dbReference type="eggNOG" id="COG2332">
    <property type="taxonomic scope" value="Bacteria"/>
</dbReference>
<dbReference type="HOGENOM" id="CLU_079503_1_1_5"/>
<dbReference type="OrthoDB" id="9793584at2"/>
<dbReference type="Proteomes" id="UP000002531">
    <property type="component" value="Chromosome"/>
</dbReference>
<dbReference type="GO" id="GO:0005886">
    <property type="term" value="C:plasma membrane"/>
    <property type="evidence" value="ECO:0007669"/>
    <property type="project" value="UniProtKB-SubCell"/>
</dbReference>
<dbReference type="GO" id="GO:0020037">
    <property type="term" value="F:heme binding"/>
    <property type="evidence" value="ECO:0007669"/>
    <property type="project" value="InterPro"/>
</dbReference>
<dbReference type="GO" id="GO:0046872">
    <property type="term" value="F:metal ion binding"/>
    <property type="evidence" value="ECO:0007669"/>
    <property type="project" value="UniProtKB-KW"/>
</dbReference>
<dbReference type="GO" id="GO:0017004">
    <property type="term" value="P:cytochrome complex assembly"/>
    <property type="evidence" value="ECO:0007669"/>
    <property type="project" value="UniProtKB-KW"/>
</dbReference>
<dbReference type="FunFam" id="2.40.50.140:FF:000104">
    <property type="entry name" value="Cytochrome c-type biogenesis protein CcmE"/>
    <property type="match status" value="1"/>
</dbReference>
<dbReference type="Gene3D" id="2.40.50.140">
    <property type="entry name" value="Nucleic acid-binding proteins"/>
    <property type="match status" value="1"/>
</dbReference>
<dbReference type="HAMAP" id="MF_01959">
    <property type="entry name" value="CcmE"/>
    <property type="match status" value="1"/>
</dbReference>
<dbReference type="InterPro" id="IPR004329">
    <property type="entry name" value="CcmE"/>
</dbReference>
<dbReference type="InterPro" id="IPR036127">
    <property type="entry name" value="CcmE-like_sf"/>
</dbReference>
<dbReference type="InterPro" id="IPR012340">
    <property type="entry name" value="NA-bd_OB-fold"/>
</dbReference>
<dbReference type="NCBIfam" id="NF009727">
    <property type="entry name" value="PRK13254.1-1"/>
    <property type="match status" value="1"/>
</dbReference>
<dbReference type="NCBIfam" id="NF009729">
    <property type="entry name" value="PRK13254.1-3"/>
    <property type="match status" value="1"/>
</dbReference>
<dbReference type="NCBIfam" id="NF009731">
    <property type="entry name" value="PRK13254.1-5"/>
    <property type="match status" value="1"/>
</dbReference>
<dbReference type="PANTHER" id="PTHR34128">
    <property type="entry name" value="CYTOCHROME C-TYPE BIOGENESIS PROTEIN CCME HOMOLOG, MITOCHONDRIAL"/>
    <property type="match status" value="1"/>
</dbReference>
<dbReference type="PANTHER" id="PTHR34128:SF2">
    <property type="entry name" value="CYTOCHROME C-TYPE BIOGENESIS PROTEIN CCME HOMOLOG, MITOCHONDRIAL"/>
    <property type="match status" value="1"/>
</dbReference>
<dbReference type="Pfam" id="PF03100">
    <property type="entry name" value="CcmE"/>
    <property type="match status" value="1"/>
</dbReference>
<dbReference type="SUPFAM" id="SSF82093">
    <property type="entry name" value="Heme chaperone CcmE"/>
    <property type="match status" value="1"/>
</dbReference>
<feature type="chain" id="PRO_0000238824" description="Cytochrome c-type biogenesis protein CcmE">
    <location>
        <begin position="1"/>
        <end position="162"/>
    </location>
</feature>
<feature type="topological domain" description="Cytoplasmic" evidence="1">
    <location>
        <begin position="1"/>
        <end position="7"/>
    </location>
</feature>
<feature type="transmembrane region" description="Helical; Signal-anchor for type II membrane protein" evidence="1">
    <location>
        <begin position="8"/>
        <end position="28"/>
    </location>
</feature>
<feature type="topological domain" description="Periplasmic" evidence="1">
    <location>
        <begin position="29"/>
        <end position="162"/>
    </location>
</feature>
<feature type="region of interest" description="Disordered" evidence="2">
    <location>
        <begin position="140"/>
        <end position="162"/>
    </location>
</feature>
<feature type="binding site" description="covalent" evidence="1">
    <location>
        <position position="122"/>
    </location>
    <ligand>
        <name>heme</name>
        <dbReference type="ChEBI" id="CHEBI:30413"/>
    </ligand>
</feature>
<feature type="binding site" description="axial binding residue" evidence="1">
    <location>
        <position position="126"/>
    </location>
    <ligand>
        <name>heme</name>
        <dbReference type="ChEBI" id="CHEBI:30413"/>
    </ligand>
    <ligandPart>
        <name>Fe</name>
        <dbReference type="ChEBI" id="CHEBI:18248"/>
    </ligandPart>
</feature>
<accession>Q3STD7</accession>
<gene>
    <name evidence="1" type="primary">ccmE</name>
    <name evidence="1" type="synonym">cycJ</name>
    <name type="ordered locus">Nwi_1192</name>
</gene>
<sequence>MTRKQRRLTMIGGALVVLGIAAALVLNALRDSIVFFSTPMMVSEKHIQPGQRFRLGGLVQTGSLVRGDNLAVSFRVSDGSATLPVSYKGILPDLFREGQGVVAEGALDNSGVFQADTVLAKHDETYMPKEVADALKKQGHWKDDYGAQPGAAEASSKQEVSQ</sequence>
<name>CCME_NITWN</name>
<comment type="function">
    <text evidence="1">Heme chaperone required for the biogenesis of c-type cytochromes. Transiently binds heme delivered by CcmC and transfers the heme to apo-cytochromes in a process facilitated by CcmF and CcmH.</text>
</comment>
<comment type="subcellular location">
    <subcellularLocation>
        <location evidence="1">Cell inner membrane</location>
        <topology evidence="1">Single-pass type II membrane protein</topology>
        <orientation evidence="1">Periplasmic side</orientation>
    </subcellularLocation>
</comment>
<comment type="similarity">
    <text evidence="1">Belongs to the CcmE/CycJ family.</text>
</comment>
<evidence type="ECO:0000255" key="1">
    <source>
        <dbReference type="HAMAP-Rule" id="MF_01959"/>
    </source>
</evidence>
<evidence type="ECO:0000256" key="2">
    <source>
        <dbReference type="SAM" id="MobiDB-lite"/>
    </source>
</evidence>
<keyword id="KW-0997">Cell inner membrane</keyword>
<keyword id="KW-1003">Cell membrane</keyword>
<keyword id="KW-0201">Cytochrome c-type biogenesis</keyword>
<keyword id="KW-0349">Heme</keyword>
<keyword id="KW-0408">Iron</keyword>
<keyword id="KW-0472">Membrane</keyword>
<keyword id="KW-0479">Metal-binding</keyword>
<keyword id="KW-1185">Reference proteome</keyword>
<keyword id="KW-0735">Signal-anchor</keyword>
<keyword id="KW-0812">Transmembrane</keyword>
<keyword id="KW-1133">Transmembrane helix</keyword>